<comment type="function">
    <text evidence="1">Peptide chain release factor 1 directs the termination of translation in response to the peptide chain termination codons UAG and UAA.</text>
</comment>
<comment type="subcellular location">
    <subcellularLocation>
        <location evidence="1">Cytoplasm</location>
    </subcellularLocation>
</comment>
<comment type="PTM">
    <text evidence="1">Methylated by PrmC. Methylation increases the termination efficiency of RF1.</text>
</comment>
<comment type="similarity">
    <text evidence="1">Belongs to the prokaryotic/mitochondrial release factor family.</text>
</comment>
<keyword id="KW-0963">Cytoplasm</keyword>
<keyword id="KW-0488">Methylation</keyword>
<keyword id="KW-0648">Protein biosynthesis</keyword>
<organism>
    <name type="scientific">Xanthomonas euvesicatoria pv. vesicatoria (strain 85-10)</name>
    <name type="common">Xanthomonas campestris pv. vesicatoria</name>
    <dbReference type="NCBI Taxonomy" id="316273"/>
    <lineage>
        <taxon>Bacteria</taxon>
        <taxon>Pseudomonadati</taxon>
        <taxon>Pseudomonadota</taxon>
        <taxon>Gammaproteobacteria</taxon>
        <taxon>Lysobacterales</taxon>
        <taxon>Lysobacteraceae</taxon>
        <taxon>Xanthomonas</taxon>
    </lineage>
</organism>
<reference key="1">
    <citation type="journal article" date="2005" name="J. Bacteriol.">
        <title>Insights into genome plasticity and pathogenicity of the plant pathogenic Bacterium Xanthomonas campestris pv. vesicatoria revealed by the complete genome sequence.</title>
        <authorList>
            <person name="Thieme F."/>
            <person name="Koebnik R."/>
            <person name="Bekel T."/>
            <person name="Berger C."/>
            <person name="Boch J."/>
            <person name="Buettner D."/>
            <person name="Caldana C."/>
            <person name="Gaigalat L."/>
            <person name="Goesmann A."/>
            <person name="Kay S."/>
            <person name="Kirchner O."/>
            <person name="Lanz C."/>
            <person name="Linke B."/>
            <person name="McHardy A.C."/>
            <person name="Meyer F."/>
            <person name="Mittenhuber G."/>
            <person name="Nies D.H."/>
            <person name="Niesbach-Kloesgen U."/>
            <person name="Patschkowski T."/>
            <person name="Rueckert C."/>
            <person name="Rupp O."/>
            <person name="Schneiker S."/>
            <person name="Schuster S.C."/>
            <person name="Vorhoelter F.J."/>
            <person name="Weber E."/>
            <person name="Puehler A."/>
            <person name="Bonas U."/>
            <person name="Bartels D."/>
            <person name="Kaiser O."/>
        </authorList>
    </citation>
    <scope>NUCLEOTIDE SEQUENCE [LARGE SCALE GENOMIC DNA]</scope>
    <source>
        <strain>85-10</strain>
    </source>
</reference>
<sequence length="361" mass="39880">MTPTLRRKLEALAERREELQHLLSDPDVVGNNDTFRTLSRELSQLEPVAMALEEEARAKADLATAEALRNDPEMRELAEEEIAAAQARLEQLDAQLASLLVPRDPRDDGNLFLEVRAGTGGDEAAIFAGDLFRMYARYAERQGWKVEIESDSPGEHGGYKEVVARVVGRGAYSRLKFESGTHRVQRVPATESQGRIHTSAATVAIIPEADDVEEITINPADLKVDTFRSSGAGGQHVNKTESAIRITHVPSGVVVECQTERSQHANRDKAMKRLKAQLLDAERSKAAAAEAQTRKLQVGSGDRSQRIRTYSFPQGRITDHRVEGLTLYDLPNIIEGDLDALIGRLLHEHQADELARLSDSP</sequence>
<name>RF1_XANE5</name>
<gene>
    <name evidence="1" type="primary">prfA</name>
    <name type="ordered locus">XCV0975</name>
</gene>
<protein>
    <recommendedName>
        <fullName evidence="1">Peptide chain release factor 1</fullName>
        <shortName evidence="1">RF-1</shortName>
    </recommendedName>
</protein>
<evidence type="ECO:0000255" key="1">
    <source>
        <dbReference type="HAMAP-Rule" id="MF_00093"/>
    </source>
</evidence>
<accession>Q3BX07</accession>
<feature type="chain" id="PRO_0000263392" description="Peptide chain release factor 1">
    <location>
        <begin position="1"/>
        <end position="361"/>
    </location>
</feature>
<feature type="modified residue" description="N5-methylglutamine" evidence="1">
    <location>
        <position position="235"/>
    </location>
</feature>
<proteinExistence type="inferred from homology"/>
<dbReference type="EMBL" id="AM039952">
    <property type="protein sequence ID" value="CAJ22606.1"/>
    <property type="molecule type" value="Genomic_DNA"/>
</dbReference>
<dbReference type="RefSeq" id="WP_011346530.1">
    <property type="nucleotide sequence ID" value="NZ_CP017190.1"/>
</dbReference>
<dbReference type="SMR" id="Q3BX07"/>
<dbReference type="STRING" id="456327.BJD11_17885"/>
<dbReference type="KEGG" id="xcv:XCV0975"/>
<dbReference type="eggNOG" id="COG0216">
    <property type="taxonomic scope" value="Bacteria"/>
</dbReference>
<dbReference type="HOGENOM" id="CLU_036856_0_1_6"/>
<dbReference type="Proteomes" id="UP000007069">
    <property type="component" value="Chromosome"/>
</dbReference>
<dbReference type="GO" id="GO:0005737">
    <property type="term" value="C:cytoplasm"/>
    <property type="evidence" value="ECO:0007669"/>
    <property type="project" value="UniProtKB-SubCell"/>
</dbReference>
<dbReference type="GO" id="GO:0016149">
    <property type="term" value="F:translation release factor activity, codon specific"/>
    <property type="evidence" value="ECO:0007669"/>
    <property type="project" value="UniProtKB-UniRule"/>
</dbReference>
<dbReference type="FunFam" id="3.30.160.20:FF:000004">
    <property type="entry name" value="Peptide chain release factor 1"/>
    <property type="match status" value="1"/>
</dbReference>
<dbReference type="FunFam" id="3.30.70.1660:FF:000002">
    <property type="entry name" value="Peptide chain release factor 1"/>
    <property type="match status" value="1"/>
</dbReference>
<dbReference type="FunFam" id="3.30.70.1660:FF:000004">
    <property type="entry name" value="Peptide chain release factor 1"/>
    <property type="match status" value="1"/>
</dbReference>
<dbReference type="Gene3D" id="3.30.160.20">
    <property type="match status" value="1"/>
</dbReference>
<dbReference type="Gene3D" id="3.30.70.1660">
    <property type="match status" value="2"/>
</dbReference>
<dbReference type="Gene3D" id="6.10.140.1950">
    <property type="match status" value="1"/>
</dbReference>
<dbReference type="HAMAP" id="MF_00093">
    <property type="entry name" value="Rel_fac_1"/>
    <property type="match status" value="1"/>
</dbReference>
<dbReference type="InterPro" id="IPR005139">
    <property type="entry name" value="PCRF"/>
</dbReference>
<dbReference type="InterPro" id="IPR000352">
    <property type="entry name" value="Pep_chain_release_fac_I"/>
</dbReference>
<dbReference type="InterPro" id="IPR045853">
    <property type="entry name" value="Pep_chain_release_fac_I_sf"/>
</dbReference>
<dbReference type="InterPro" id="IPR050057">
    <property type="entry name" value="Prokaryotic/Mito_RF"/>
</dbReference>
<dbReference type="InterPro" id="IPR004373">
    <property type="entry name" value="RF-1"/>
</dbReference>
<dbReference type="NCBIfam" id="TIGR00019">
    <property type="entry name" value="prfA"/>
    <property type="match status" value="1"/>
</dbReference>
<dbReference type="NCBIfam" id="NF001859">
    <property type="entry name" value="PRK00591.1"/>
    <property type="match status" value="1"/>
</dbReference>
<dbReference type="PANTHER" id="PTHR43804">
    <property type="entry name" value="LD18447P"/>
    <property type="match status" value="1"/>
</dbReference>
<dbReference type="PANTHER" id="PTHR43804:SF7">
    <property type="entry name" value="LD18447P"/>
    <property type="match status" value="1"/>
</dbReference>
<dbReference type="Pfam" id="PF03462">
    <property type="entry name" value="PCRF"/>
    <property type="match status" value="1"/>
</dbReference>
<dbReference type="Pfam" id="PF00472">
    <property type="entry name" value="RF-1"/>
    <property type="match status" value="1"/>
</dbReference>
<dbReference type="SMART" id="SM00937">
    <property type="entry name" value="PCRF"/>
    <property type="match status" value="1"/>
</dbReference>
<dbReference type="SUPFAM" id="SSF75620">
    <property type="entry name" value="Release factor"/>
    <property type="match status" value="1"/>
</dbReference>
<dbReference type="PROSITE" id="PS00745">
    <property type="entry name" value="RF_PROK_I"/>
    <property type="match status" value="1"/>
</dbReference>